<proteinExistence type="evidence at protein level"/>
<comment type="function">
    <text evidence="1 5 6 7 8">Serine/threonine-protein kinase which phosphorylates the alpha subunit of eukaryotic translation-initiation factor 2 (eIF2alpha), leading to its inactivation and thus to a rapid reduction of translational initiation and repression of global protein synthesis (By similarity). Involved in the unfolded protein response (UPR) triggered by several stresses including mitochondrial, osmotic and oxidative stresses, amino acid deprivation and UV irradiation, probably by phosphorylating and inhibiting eIF2alpha (PubMed:20733002, PubMed:22719267, PubMed:23076791, PubMed:23692540). In addition, leads to the selective translation/transcription of some mRNA including atf-5, pha-4 and gpdh-1 which are part of the UPR (PubMed:23076791, PubMed:23692540). Required for maintaining lifespan during amino acid starvation (PubMed:23692540). Involved in hypoxia-mediated adaptive protective response (PubMed:20733002).</text>
</comment>
<comment type="catalytic activity">
    <reaction evidence="1">
        <text>L-seryl-[protein] + ATP = O-phospho-L-seryl-[protein] + ADP + H(+)</text>
        <dbReference type="Rhea" id="RHEA:17989"/>
        <dbReference type="Rhea" id="RHEA-COMP:9863"/>
        <dbReference type="Rhea" id="RHEA-COMP:11604"/>
        <dbReference type="ChEBI" id="CHEBI:15378"/>
        <dbReference type="ChEBI" id="CHEBI:29999"/>
        <dbReference type="ChEBI" id="CHEBI:30616"/>
        <dbReference type="ChEBI" id="CHEBI:83421"/>
        <dbReference type="ChEBI" id="CHEBI:456216"/>
        <dbReference type="EC" id="2.7.11.1"/>
    </reaction>
</comment>
<comment type="catalytic activity">
    <reaction evidence="1">
        <text>L-threonyl-[protein] + ATP = O-phospho-L-threonyl-[protein] + ADP + H(+)</text>
        <dbReference type="Rhea" id="RHEA:46608"/>
        <dbReference type="Rhea" id="RHEA-COMP:11060"/>
        <dbReference type="Rhea" id="RHEA-COMP:11605"/>
        <dbReference type="ChEBI" id="CHEBI:15378"/>
        <dbReference type="ChEBI" id="CHEBI:30013"/>
        <dbReference type="ChEBI" id="CHEBI:30616"/>
        <dbReference type="ChEBI" id="CHEBI:61977"/>
        <dbReference type="ChEBI" id="CHEBI:456216"/>
        <dbReference type="EC" id="2.7.11.1"/>
    </reaction>
</comment>
<comment type="alternative products">
    <event type="alternative splicing"/>
    <isoform>
        <id>D0Z5N4-1</id>
        <name evidence="13">b</name>
        <sequence type="displayed"/>
    </isoform>
    <isoform>
        <id>D0Z5N4-2</id>
        <name evidence="12">a</name>
        <sequence type="described" ref="VSP_057682"/>
    </isoform>
</comment>
<comment type="domain">
    <text evidence="9">The protein kinase domain 1 is predicted to be catalytically inactive.</text>
</comment>
<comment type="disruption phenotype">
    <text evidence="6">RNAi-mediated knockdown results in slower development and shortened lifespan when exposed to mitochondrial stress.</text>
</comment>
<comment type="similarity">
    <text evidence="9">Belongs to the protein kinase superfamily. Ser/Thr protein kinase family. GCN2 subfamily.</text>
</comment>
<protein>
    <recommendedName>
        <fullName evidence="10">Eukaryotic translation initiation factor 2-alpha kinase gcn-2</fullName>
        <ecNumber evidence="1">2.7.11.1</ecNumber>
    </recommendedName>
    <alternativeName>
        <fullName evidence="13">General control nonderepressible kinase 2</fullName>
    </alternativeName>
</protein>
<gene>
    <name evidence="13" type="primary">gcn-2</name>
    <name evidence="13" type="ORF">Y81G3A.3</name>
</gene>
<evidence type="ECO:0000250" key="1">
    <source>
        <dbReference type="UniProtKB" id="Q19192"/>
    </source>
</evidence>
<evidence type="ECO:0000255" key="2">
    <source>
        <dbReference type="PROSITE-ProRule" id="PRU00159"/>
    </source>
</evidence>
<evidence type="ECO:0000255" key="3">
    <source>
        <dbReference type="PROSITE-ProRule" id="PRU00179"/>
    </source>
</evidence>
<evidence type="ECO:0000256" key="4">
    <source>
        <dbReference type="SAM" id="MobiDB-lite"/>
    </source>
</evidence>
<evidence type="ECO:0000269" key="5">
    <source>
    </source>
</evidence>
<evidence type="ECO:0000269" key="6">
    <source>
    </source>
</evidence>
<evidence type="ECO:0000269" key="7">
    <source>
    </source>
</evidence>
<evidence type="ECO:0000269" key="8">
    <source>
    </source>
</evidence>
<evidence type="ECO:0000305" key="9"/>
<evidence type="ECO:0000305" key="10">
    <source>
    </source>
</evidence>
<evidence type="ECO:0000312" key="11">
    <source>
        <dbReference type="Proteomes" id="UP000001940"/>
    </source>
</evidence>
<evidence type="ECO:0000312" key="12">
    <source>
        <dbReference type="WormBase" id="Y81G3A.3a"/>
    </source>
</evidence>
<evidence type="ECO:0000312" key="13">
    <source>
        <dbReference type="WormBase" id="Y81G3A.3b"/>
    </source>
</evidence>
<accession>D0Z5N4</accession>
<accession>Q9XVY4</accession>
<organism evidence="11">
    <name type="scientific">Caenorhabditis elegans</name>
    <dbReference type="NCBI Taxonomy" id="6239"/>
    <lineage>
        <taxon>Eukaryota</taxon>
        <taxon>Metazoa</taxon>
        <taxon>Ecdysozoa</taxon>
        <taxon>Nematoda</taxon>
        <taxon>Chromadorea</taxon>
        <taxon>Rhabditida</taxon>
        <taxon>Rhabditina</taxon>
        <taxon>Rhabditomorpha</taxon>
        <taxon>Rhabditoidea</taxon>
        <taxon>Rhabditidae</taxon>
        <taxon>Peloderinae</taxon>
        <taxon>Caenorhabditis</taxon>
    </lineage>
</organism>
<dbReference type="EC" id="2.7.11.1" evidence="1"/>
<dbReference type="EMBL" id="BX284602">
    <property type="protein sequence ID" value="CBI63247.2"/>
    <property type="molecule type" value="Genomic_DNA"/>
</dbReference>
<dbReference type="EMBL" id="BX284602">
    <property type="protein sequence ID" value="CAA22515.2"/>
    <property type="molecule type" value="Genomic_DNA"/>
</dbReference>
<dbReference type="PIR" id="T27447">
    <property type="entry name" value="T27447"/>
</dbReference>
<dbReference type="RefSeq" id="NP_001254370.2">
    <property type="nucleotide sequence ID" value="NM_001267441.2"/>
</dbReference>
<dbReference type="RefSeq" id="NP_001254371.2">
    <property type="nucleotide sequence ID" value="NM_001267442.2"/>
</dbReference>
<dbReference type="RefSeq" id="NP_001366669.1">
    <molecule id="D0Z5N4-2"/>
    <property type="nucleotide sequence ID" value="NM_001381637.2"/>
</dbReference>
<dbReference type="RefSeq" id="NP_001367229.1">
    <molecule id="D0Z5N4-1"/>
    <property type="nucleotide sequence ID" value="NM_001381636.1"/>
</dbReference>
<dbReference type="SMR" id="D0Z5N4"/>
<dbReference type="DIP" id="DIP-27197N"/>
<dbReference type="FunCoup" id="D0Z5N4">
    <property type="interactions" value="3152"/>
</dbReference>
<dbReference type="IntAct" id="D0Z5N4">
    <property type="interactions" value="1"/>
</dbReference>
<dbReference type="STRING" id="6239.Y81G3A.3b.1"/>
<dbReference type="TCDB" id="8.A.23.1.51">
    <property type="family name" value="the basigin (basigin) family"/>
</dbReference>
<dbReference type="PaxDb" id="6239-Y81G3A.3b"/>
<dbReference type="PeptideAtlas" id="D0Z5N4"/>
<dbReference type="EnsemblMetazoa" id="Y81G3A.3a.1">
    <molecule id="D0Z5N4-2"/>
    <property type="protein sequence ID" value="Y81G3A.3a.1"/>
    <property type="gene ID" value="WBGene00013591"/>
</dbReference>
<dbReference type="EnsemblMetazoa" id="Y81G3A.3b.1">
    <molecule id="D0Z5N4-1"/>
    <property type="protein sequence ID" value="Y81G3A.3b.1"/>
    <property type="gene ID" value="WBGene00013591"/>
</dbReference>
<dbReference type="GeneID" id="174953"/>
<dbReference type="UCSC" id="Y81G3A.3">
    <property type="organism name" value="c. elegans"/>
</dbReference>
<dbReference type="AGR" id="WB:WBGene00013591"/>
<dbReference type="WormBase" id="Y81G3A.3a">
    <molecule id="D0Z5N4-2"/>
    <property type="protein sequence ID" value="CE47938"/>
    <property type="gene ID" value="WBGene00013591"/>
    <property type="gene designation" value="gcn-2"/>
</dbReference>
<dbReference type="WormBase" id="Y81G3A.3b">
    <molecule id="D0Z5N4-1"/>
    <property type="protein sequence ID" value="CE47891"/>
    <property type="gene ID" value="WBGene00013591"/>
    <property type="gene designation" value="gcn-2"/>
</dbReference>
<dbReference type="eggNOG" id="KOG1035">
    <property type="taxonomic scope" value="Eukaryota"/>
</dbReference>
<dbReference type="InParanoid" id="D0Z5N4"/>
<dbReference type="OMA" id="IKRYHIT"/>
<dbReference type="OrthoDB" id="5915312at2759"/>
<dbReference type="PhylomeDB" id="D0Z5N4"/>
<dbReference type="PRO" id="PR:D0Z5N4"/>
<dbReference type="Proteomes" id="UP000001940">
    <property type="component" value="Chromosome II"/>
</dbReference>
<dbReference type="Bgee" id="WBGene00013591">
    <property type="expression patterns" value="Expressed in germ line (C elegans) and 4 other cell types or tissues"/>
</dbReference>
<dbReference type="GO" id="GO:0005737">
    <property type="term" value="C:cytoplasm"/>
    <property type="evidence" value="ECO:0000318"/>
    <property type="project" value="GO_Central"/>
</dbReference>
<dbReference type="GO" id="GO:0005829">
    <property type="term" value="C:cytosol"/>
    <property type="evidence" value="ECO:0000318"/>
    <property type="project" value="GO_Central"/>
</dbReference>
<dbReference type="GO" id="GO:0005634">
    <property type="term" value="C:nucleus"/>
    <property type="evidence" value="ECO:0000318"/>
    <property type="project" value="GO_Central"/>
</dbReference>
<dbReference type="GO" id="GO:0005524">
    <property type="term" value="F:ATP binding"/>
    <property type="evidence" value="ECO:0007669"/>
    <property type="project" value="UniProtKB-KW"/>
</dbReference>
<dbReference type="GO" id="GO:0004694">
    <property type="term" value="F:eukaryotic translation initiation factor 2alpha kinase activity"/>
    <property type="evidence" value="ECO:0000318"/>
    <property type="project" value="GO_Central"/>
</dbReference>
<dbReference type="GO" id="GO:0106310">
    <property type="term" value="F:protein serine kinase activity"/>
    <property type="evidence" value="ECO:0007669"/>
    <property type="project" value="RHEA"/>
</dbReference>
<dbReference type="GO" id="GO:0019725">
    <property type="term" value="P:cellular homeostasis"/>
    <property type="evidence" value="ECO:0000315"/>
    <property type="project" value="UniProtKB"/>
</dbReference>
<dbReference type="GO" id="GO:0034198">
    <property type="term" value="P:cellular response to amino acid starvation"/>
    <property type="evidence" value="ECO:0000318"/>
    <property type="project" value="GO_Central"/>
</dbReference>
<dbReference type="GO" id="GO:0008340">
    <property type="term" value="P:determination of adult lifespan"/>
    <property type="evidence" value="ECO:0000316"/>
    <property type="project" value="UniProtKB"/>
</dbReference>
<dbReference type="GO" id="GO:0034514">
    <property type="term" value="P:mitochondrial unfolded protein response"/>
    <property type="evidence" value="ECO:0000315"/>
    <property type="project" value="UniProtKB"/>
</dbReference>
<dbReference type="GO" id="GO:0010629">
    <property type="term" value="P:negative regulation of gene expression"/>
    <property type="evidence" value="ECO:0000316"/>
    <property type="project" value="UniProtKB"/>
</dbReference>
<dbReference type="GO" id="GO:0032057">
    <property type="term" value="P:negative regulation of translational initiation in response to stress"/>
    <property type="evidence" value="ECO:0000318"/>
    <property type="project" value="GO_Central"/>
</dbReference>
<dbReference type="GO" id="GO:0010628">
    <property type="term" value="P:positive regulation of gene expression"/>
    <property type="evidence" value="ECO:0000315"/>
    <property type="project" value="UniProtKB"/>
</dbReference>
<dbReference type="GO" id="GO:0061063">
    <property type="term" value="P:positive regulation of nematode larval development"/>
    <property type="evidence" value="ECO:0000315"/>
    <property type="project" value="UniProtKB"/>
</dbReference>
<dbReference type="GO" id="GO:1904808">
    <property type="term" value="P:positive regulation of protein oxidation"/>
    <property type="evidence" value="ECO:0000316"/>
    <property type="project" value="UniProtKB"/>
</dbReference>
<dbReference type="GO" id="GO:0001934">
    <property type="term" value="P:positive regulation of protein phosphorylation"/>
    <property type="evidence" value="ECO:0000315"/>
    <property type="project" value="UniProtKB"/>
</dbReference>
<dbReference type="GO" id="GO:0060378">
    <property type="term" value="P:regulation of brood size"/>
    <property type="evidence" value="ECO:0000316"/>
    <property type="project" value="UniProtKB"/>
</dbReference>
<dbReference type="GO" id="GO:0009408">
    <property type="term" value="P:response to heat"/>
    <property type="evidence" value="ECO:0000315"/>
    <property type="project" value="UniProtKB"/>
</dbReference>
<dbReference type="GO" id="GO:0001666">
    <property type="term" value="P:response to hypoxia"/>
    <property type="evidence" value="ECO:0000315"/>
    <property type="project" value="UniProtKB"/>
</dbReference>
<dbReference type="GO" id="GO:1903935">
    <property type="term" value="P:response to sodium arsenite"/>
    <property type="evidence" value="ECO:0000316"/>
    <property type="project" value="UniProtKB"/>
</dbReference>
<dbReference type="GO" id="GO:0042594">
    <property type="term" value="P:response to starvation"/>
    <property type="evidence" value="ECO:0000315"/>
    <property type="project" value="UniProtKB"/>
</dbReference>
<dbReference type="GO" id="GO:0009411">
    <property type="term" value="P:response to UV"/>
    <property type="evidence" value="ECO:0000315"/>
    <property type="project" value="UniProtKB"/>
</dbReference>
<dbReference type="GO" id="GO:0034063">
    <property type="term" value="P:stress granule assembly"/>
    <property type="evidence" value="ECO:0000315"/>
    <property type="project" value="WormBase"/>
</dbReference>
<dbReference type="CDD" id="cd23823">
    <property type="entry name" value="RWD_GCN2"/>
    <property type="match status" value="1"/>
</dbReference>
<dbReference type="FunFam" id="3.10.110.10:FF:000050">
    <property type="entry name" value="eIF-2-alpha kinase GCN2"/>
    <property type="match status" value="1"/>
</dbReference>
<dbReference type="FunFam" id="3.30.930.10:FF:000194">
    <property type="entry name" value="Eukaryotic translation initiation factor 2-alpha kinase gcn-2"/>
    <property type="match status" value="1"/>
</dbReference>
<dbReference type="Gene3D" id="3.30.930.10">
    <property type="entry name" value="Bira Bifunctional Protein, Domain 2"/>
    <property type="match status" value="1"/>
</dbReference>
<dbReference type="Gene3D" id="3.30.200.20">
    <property type="entry name" value="Phosphorylase Kinase, domain 1"/>
    <property type="match status" value="1"/>
</dbReference>
<dbReference type="Gene3D" id="1.10.510.10">
    <property type="entry name" value="Transferase(Phosphotransferase) domain 1"/>
    <property type="match status" value="1"/>
</dbReference>
<dbReference type="Gene3D" id="3.10.110.10">
    <property type="entry name" value="Ubiquitin Conjugating Enzyme"/>
    <property type="match status" value="1"/>
</dbReference>
<dbReference type="InterPro" id="IPR045864">
    <property type="entry name" value="aa-tRNA-synth_II/BPL/LPL"/>
</dbReference>
<dbReference type="InterPro" id="IPR050339">
    <property type="entry name" value="CC_SR_Kinase"/>
</dbReference>
<dbReference type="InterPro" id="IPR011009">
    <property type="entry name" value="Kinase-like_dom_sf"/>
</dbReference>
<dbReference type="InterPro" id="IPR000719">
    <property type="entry name" value="Prot_kinase_dom"/>
</dbReference>
<dbReference type="InterPro" id="IPR017441">
    <property type="entry name" value="Protein_kinase_ATP_BS"/>
</dbReference>
<dbReference type="InterPro" id="IPR006575">
    <property type="entry name" value="RWD_dom"/>
</dbReference>
<dbReference type="InterPro" id="IPR008271">
    <property type="entry name" value="Ser/Thr_kinase_AS"/>
</dbReference>
<dbReference type="InterPro" id="IPR016135">
    <property type="entry name" value="UBQ-conjugating_enzyme/RWD"/>
</dbReference>
<dbReference type="PANTHER" id="PTHR11042:SF136">
    <property type="entry name" value="EIF-2-ALPHA KINASE GCN2"/>
    <property type="match status" value="1"/>
</dbReference>
<dbReference type="PANTHER" id="PTHR11042">
    <property type="entry name" value="EUKARYOTIC TRANSLATION INITIATION FACTOR 2-ALPHA KINASE EIF2-ALPHA KINASE -RELATED"/>
    <property type="match status" value="1"/>
</dbReference>
<dbReference type="Pfam" id="PF00069">
    <property type="entry name" value="Pkinase"/>
    <property type="match status" value="2"/>
</dbReference>
<dbReference type="Pfam" id="PF05773">
    <property type="entry name" value="RWD"/>
    <property type="match status" value="1"/>
</dbReference>
<dbReference type="SMART" id="SM00591">
    <property type="entry name" value="RWD"/>
    <property type="match status" value="1"/>
</dbReference>
<dbReference type="SMART" id="SM00220">
    <property type="entry name" value="S_TKc"/>
    <property type="match status" value="1"/>
</dbReference>
<dbReference type="SUPFAM" id="SSF55681">
    <property type="entry name" value="Class II aaRS and biotin synthetases"/>
    <property type="match status" value="1"/>
</dbReference>
<dbReference type="SUPFAM" id="SSF56112">
    <property type="entry name" value="Protein kinase-like (PK-like)"/>
    <property type="match status" value="2"/>
</dbReference>
<dbReference type="SUPFAM" id="SSF54495">
    <property type="entry name" value="UBC-like"/>
    <property type="match status" value="1"/>
</dbReference>
<dbReference type="PROSITE" id="PS00107">
    <property type="entry name" value="PROTEIN_KINASE_ATP"/>
    <property type="match status" value="1"/>
</dbReference>
<dbReference type="PROSITE" id="PS50011">
    <property type="entry name" value="PROTEIN_KINASE_DOM"/>
    <property type="match status" value="2"/>
</dbReference>
<dbReference type="PROSITE" id="PS00108">
    <property type="entry name" value="PROTEIN_KINASE_ST"/>
    <property type="match status" value="1"/>
</dbReference>
<dbReference type="PROSITE" id="PS50908">
    <property type="entry name" value="RWD"/>
    <property type="match status" value="1"/>
</dbReference>
<keyword id="KW-0025">Alternative splicing</keyword>
<keyword id="KW-0067">ATP-binding</keyword>
<keyword id="KW-0418">Kinase</keyword>
<keyword id="KW-0547">Nucleotide-binding</keyword>
<keyword id="KW-1185">Reference proteome</keyword>
<keyword id="KW-0677">Repeat</keyword>
<keyword id="KW-0723">Serine/threonine-protein kinase</keyword>
<keyword id="KW-0346">Stress response</keyword>
<keyword id="KW-0808">Transferase</keyword>
<keyword id="KW-0810">Translation regulation</keyword>
<keyword id="KW-0834">Unfolded protein response</keyword>
<reference evidence="11" key="1">
    <citation type="journal article" date="1998" name="Science">
        <title>Genome sequence of the nematode C. elegans: a platform for investigating biology.</title>
        <authorList>
            <consortium name="The C. elegans sequencing consortium"/>
        </authorList>
    </citation>
    <scope>NUCLEOTIDE SEQUENCE [LARGE SCALE GENOMIC DNA]</scope>
    <source>
        <strain evidence="11">Bristol N2</strain>
    </source>
</reference>
<reference evidence="9" key="2">
    <citation type="journal article" date="2010" name="Mol. Cell. Biol.">
        <title>Protein misfolding induces hypoxic preconditioning via a subset of the unfolded protein response machinery.</title>
        <authorList>
            <person name="Mao X.R."/>
            <person name="Crowder C.M."/>
        </authorList>
    </citation>
    <scope>FUNCTION</scope>
</reference>
<reference evidence="9" key="3">
    <citation type="journal article" date="2012" name="Am. J. Physiol.">
        <title>GCN-2 dependent inhibition of protein synthesis activates osmosensitive gene transcription via WNK and Ste20 kinase signaling.</title>
        <authorList>
            <person name="Lee E.C."/>
            <person name="Strange K."/>
        </authorList>
    </citation>
    <scope>FUNCTION</scope>
    <scope>CATALYTIC ACTIVITY</scope>
</reference>
<reference evidence="9" key="4">
    <citation type="journal article" date="2012" name="PLoS Genet.">
        <title>Protective coupling of mitochondrial function and protein synthesis via the eIF2alpha kinase GCN-2.</title>
        <authorList>
            <person name="Baker B.M."/>
            <person name="Nargund A.M."/>
            <person name="Sun T."/>
            <person name="Haynes C.M."/>
        </authorList>
    </citation>
    <scope>FUNCTION</scope>
    <scope>CATALYTIC ACTIVITY</scope>
    <scope>DISRUPTION PHENOTYPE</scope>
</reference>
<reference evidence="9" key="5">
    <citation type="journal article" date="2013" name="Aging Cell">
        <title>The general control nonderepressible-2 kinase mediates stress response and longevity induced by target of rapamycin inactivation in Caenorhabditis elegans.</title>
        <authorList>
            <person name="Rousakis A."/>
            <person name="Vlassis A."/>
            <person name="Vlanti A."/>
            <person name="Patera S."/>
            <person name="Thireos G."/>
            <person name="Syntichaki P."/>
        </authorList>
    </citation>
    <scope>FUNCTION</scope>
</reference>
<feature type="chain" id="PRO_0000433217" description="Eukaryotic translation initiation factor 2-alpha kinase gcn-2" evidence="9">
    <location>
        <begin position="1"/>
        <end position="1699"/>
    </location>
</feature>
<feature type="domain" description="RWD" evidence="3">
    <location>
        <begin position="22"/>
        <end position="138"/>
    </location>
</feature>
<feature type="domain" description="Protein kinase 1" evidence="2">
    <location>
        <begin position="108"/>
        <end position="507"/>
    </location>
</feature>
<feature type="domain" description="Protein kinase 2" evidence="2">
    <location>
        <begin position="508"/>
        <end position="999"/>
    </location>
</feature>
<feature type="region of interest" description="Disordered" evidence="4">
    <location>
        <begin position="572"/>
        <end position="615"/>
    </location>
</feature>
<feature type="region of interest" description="Disordered" evidence="4">
    <location>
        <begin position="632"/>
        <end position="725"/>
    </location>
</feature>
<feature type="compositionally biased region" description="Acidic residues" evidence="4">
    <location>
        <begin position="669"/>
        <end position="706"/>
    </location>
</feature>
<feature type="compositionally biased region" description="Polar residues" evidence="4">
    <location>
        <begin position="711"/>
        <end position="720"/>
    </location>
</feature>
<feature type="active site" description="Proton acceptor" evidence="2">
    <location>
        <position position="829"/>
    </location>
</feature>
<feature type="binding site" evidence="2">
    <location>
        <begin position="114"/>
        <end position="122"/>
    </location>
    <ligand>
        <name>ATP</name>
        <dbReference type="ChEBI" id="CHEBI:30616"/>
    </ligand>
</feature>
<feature type="binding site" evidence="2">
    <location>
        <position position="154"/>
    </location>
    <ligand>
        <name>ATP</name>
        <dbReference type="ChEBI" id="CHEBI:30616"/>
    </ligand>
</feature>
<feature type="binding site" evidence="2">
    <location>
        <begin position="497"/>
        <end position="505"/>
    </location>
    <ligand>
        <name>ATP</name>
        <dbReference type="ChEBI" id="CHEBI:30616"/>
    </ligand>
</feature>
<feature type="binding site" evidence="2">
    <location>
        <position position="520"/>
    </location>
    <ligand>
        <name>ATP</name>
        <dbReference type="ChEBI" id="CHEBI:30616"/>
    </ligand>
</feature>
<feature type="splice variant" id="VSP_057682" description="In isoform a." evidence="9">
    <location>
        <begin position="1552"/>
        <end position="1554"/>
    </location>
</feature>
<sequence>MTKENQIVLDERVKENQHLQEEEKLALDAVYLNQITYIKAHWHVWVPTNCHILLKALDSCFLNGDPLGKSKLSVILHVKCSEDYPQRKPAVDLLDPQGLSKEDVQNLLTILRQMADTWEGCVVIAELAHRVREFLTDHTPRPAGSFHDDMLANKVRTEAEKQRKRLDTEQKELELLEEEMRQRNAIEMEKTLNGTRQENETRIIGGRRIVVLSNMPNTQLLISEWTFRFSSNRNPAEGKRKDFAPFLQKLDAVYNEIQKLCEIKGLDQNLVEYAFVHLQKISVSPDQILIQLNVAQKIFSSEENMQDTYELIVQKSNLLRLLAAQAICGLRYLHEASMTHKHLTLGSVWTRNSTGDCVFRFSDFGSMGPLLDLVKMFGDICSGKYVARDEDKEKEYDRRRKDLFQLGTLLDGLILATRGSTYSRVPTPVEGNQNTGTNLLGNFIAKCQEAKNIDQLVEDPFLKEECQSESENIFTPFGGAMSPDGRMLADNVIIRVLGRGGFGDVVLVRNKMDSTDYAIKRIPLNAKSDKLNRKIAKEAKFFAKLNHPNMVRYYYAWAEDLIPIVEETSDDDSSLGAVPIPGKEKIGKKGKLKTGKSLEDKENKANLGGGDSLMPMNLRGLVKDHSIGVDAKEWSTPFGKPEGPKCASRMRQSKRSTPSGGLKHLSECSSDDEDDDDSSEIDWDAESEEVEDEESDDSDEEDEDDGERLVQLNTETSTGADSVFERSTADEDVVFTAESEDLNAKRRESIELMEINTTTTSKSKLAIDVVPVRKPRILCIQMEYCDRATLRQYIDENHCFNAPTEVWRIFSEVLCGLKYMHDMAMIHRDIKPLNIFLTSQNGVKIGDFGLATLEAMSSKGKIVGGAAEKSTSIEAMLSPNGVKSKGSDVHQTRDIGTQLYMAPELFVDELVHKAPYTSKIDIYSAGVVLFEMFYRPLPPSMDRVSTLNNLRDDIKIPSDFGAGLAAPMAGLARRTVEKMLQRNPDERPTADDLLNDEDLPMHTKEDATFRNLCEKVIKKRDGRMNAWLLDKQFKEEVPTSLNYCYDVDICLERAKYNNREVLVETLRAEFCKILKIHSFEKLHTHTLMPVSTALAAASVRTKPVEVLDRSGVPVALPMDLRQNFVRFCVRNSVQRMKRFNFGRVYSQTSANGHPHERWECCVDCIGPQCSSPSLEAELLLVACEMMIGSLPGMKFTLKIGHAQLIEAQIRHLKLSDDVRAELLDALHLISVSDRPHSHKEKMDMLTPKIGAKAANIITKLLIPVEDNFGAFKEKVACFRKKLKVDAARVLVDKAIRDLEEIVGTFKFCRTEAIEQISIVYDSQTCYRPRTFGDGLLFQIQVEKPSTIANNKRGRRQNVLAGGRYDSALLRERHPRDFVYEIPLCISGFGVAMDVVSQIRDSINKSANIPKTPQNHCKVLICSMVQPDGSNLITQKFELAKKLWSMGIEADVFHIPVDDLESLTEHRNRASITHILAVYNTLNEVICKTETSSETMDVDSAISSVWRGVQALDGQSIHMTPCGGGPISSISTPGEAHHHDDHHPGTPVIASKCFRSSVSTTVATTSIRPISATVANLNVILVTSADRFHKVMKEKKRVESQVRNHLTEFVAHFTSKTRIEVLVCDIPADVIKKIVSELTKTSSEAEIDKLFDQLIQKHGKVDLSPLRRQFHITLNGISTGSAQVAILFYRQSDNFYRYLV</sequence>
<name>E2AKB_CAEEL</name>